<proteinExistence type="inferred from homology"/>
<organism>
    <name type="scientific">Nitrosomonas eutropha (strain DSM 101675 / C91 / Nm57)</name>
    <dbReference type="NCBI Taxonomy" id="335283"/>
    <lineage>
        <taxon>Bacteria</taxon>
        <taxon>Pseudomonadati</taxon>
        <taxon>Pseudomonadota</taxon>
        <taxon>Betaproteobacteria</taxon>
        <taxon>Nitrosomonadales</taxon>
        <taxon>Nitrosomonadaceae</taxon>
        <taxon>Nitrosomonas</taxon>
    </lineage>
</organism>
<protein>
    <recommendedName>
        <fullName evidence="1">Glutamyl-tRNA(Gln) amidotransferase subunit A</fullName>
        <shortName evidence="1">Glu-ADT subunit A</shortName>
        <ecNumber evidence="1">6.3.5.7</ecNumber>
    </recommendedName>
</protein>
<comment type="function">
    <text evidence="1">Allows the formation of correctly charged Gln-tRNA(Gln) through the transamidation of misacylated Glu-tRNA(Gln) in organisms which lack glutaminyl-tRNA synthetase. The reaction takes place in the presence of glutamine and ATP through an activated gamma-phospho-Glu-tRNA(Gln).</text>
</comment>
<comment type="catalytic activity">
    <reaction evidence="1">
        <text>L-glutamyl-tRNA(Gln) + L-glutamine + ATP + H2O = L-glutaminyl-tRNA(Gln) + L-glutamate + ADP + phosphate + H(+)</text>
        <dbReference type="Rhea" id="RHEA:17521"/>
        <dbReference type="Rhea" id="RHEA-COMP:9681"/>
        <dbReference type="Rhea" id="RHEA-COMP:9684"/>
        <dbReference type="ChEBI" id="CHEBI:15377"/>
        <dbReference type="ChEBI" id="CHEBI:15378"/>
        <dbReference type="ChEBI" id="CHEBI:29985"/>
        <dbReference type="ChEBI" id="CHEBI:30616"/>
        <dbReference type="ChEBI" id="CHEBI:43474"/>
        <dbReference type="ChEBI" id="CHEBI:58359"/>
        <dbReference type="ChEBI" id="CHEBI:78520"/>
        <dbReference type="ChEBI" id="CHEBI:78521"/>
        <dbReference type="ChEBI" id="CHEBI:456216"/>
        <dbReference type="EC" id="6.3.5.7"/>
    </reaction>
</comment>
<comment type="subunit">
    <text evidence="1">Heterotrimer of A, B and C subunits.</text>
</comment>
<comment type="similarity">
    <text evidence="1">Belongs to the amidase family. GatA subfamily.</text>
</comment>
<accession>Q0AFP4</accession>
<name>GATA_NITEC</name>
<dbReference type="EC" id="6.3.5.7" evidence="1"/>
<dbReference type="EMBL" id="CP000450">
    <property type="protein sequence ID" value="ABI59838.1"/>
    <property type="molecule type" value="Genomic_DNA"/>
</dbReference>
<dbReference type="RefSeq" id="WP_011634644.1">
    <property type="nucleotide sequence ID" value="NC_008344.1"/>
</dbReference>
<dbReference type="SMR" id="Q0AFP4"/>
<dbReference type="STRING" id="335283.Neut_1594"/>
<dbReference type="KEGG" id="net:Neut_1594"/>
<dbReference type="eggNOG" id="COG0154">
    <property type="taxonomic scope" value="Bacteria"/>
</dbReference>
<dbReference type="HOGENOM" id="CLU_009600_0_3_4"/>
<dbReference type="OrthoDB" id="9811471at2"/>
<dbReference type="Proteomes" id="UP000001966">
    <property type="component" value="Chromosome"/>
</dbReference>
<dbReference type="GO" id="GO:0030956">
    <property type="term" value="C:glutamyl-tRNA(Gln) amidotransferase complex"/>
    <property type="evidence" value="ECO:0007669"/>
    <property type="project" value="InterPro"/>
</dbReference>
<dbReference type="GO" id="GO:0005524">
    <property type="term" value="F:ATP binding"/>
    <property type="evidence" value="ECO:0007669"/>
    <property type="project" value="UniProtKB-KW"/>
</dbReference>
<dbReference type="GO" id="GO:0050567">
    <property type="term" value="F:glutaminyl-tRNA synthase (glutamine-hydrolyzing) activity"/>
    <property type="evidence" value="ECO:0007669"/>
    <property type="project" value="UniProtKB-UniRule"/>
</dbReference>
<dbReference type="GO" id="GO:0006412">
    <property type="term" value="P:translation"/>
    <property type="evidence" value="ECO:0007669"/>
    <property type="project" value="UniProtKB-UniRule"/>
</dbReference>
<dbReference type="Gene3D" id="3.90.1300.10">
    <property type="entry name" value="Amidase signature (AS) domain"/>
    <property type="match status" value="1"/>
</dbReference>
<dbReference type="HAMAP" id="MF_00120">
    <property type="entry name" value="GatA"/>
    <property type="match status" value="1"/>
</dbReference>
<dbReference type="InterPro" id="IPR000120">
    <property type="entry name" value="Amidase"/>
</dbReference>
<dbReference type="InterPro" id="IPR020556">
    <property type="entry name" value="Amidase_CS"/>
</dbReference>
<dbReference type="InterPro" id="IPR023631">
    <property type="entry name" value="Amidase_dom"/>
</dbReference>
<dbReference type="InterPro" id="IPR036928">
    <property type="entry name" value="AS_sf"/>
</dbReference>
<dbReference type="InterPro" id="IPR004412">
    <property type="entry name" value="GatA"/>
</dbReference>
<dbReference type="NCBIfam" id="TIGR00132">
    <property type="entry name" value="gatA"/>
    <property type="match status" value="1"/>
</dbReference>
<dbReference type="PANTHER" id="PTHR11895:SF151">
    <property type="entry name" value="GLUTAMYL-TRNA(GLN) AMIDOTRANSFERASE SUBUNIT A"/>
    <property type="match status" value="1"/>
</dbReference>
<dbReference type="PANTHER" id="PTHR11895">
    <property type="entry name" value="TRANSAMIDASE"/>
    <property type="match status" value="1"/>
</dbReference>
<dbReference type="Pfam" id="PF01425">
    <property type="entry name" value="Amidase"/>
    <property type="match status" value="1"/>
</dbReference>
<dbReference type="SUPFAM" id="SSF75304">
    <property type="entry name" value="Amidase signature (AS) enzymes"/>
    <property type="match status" value="1"/>
</dbReference>
<dbReference type="PROSITE" id="PS00571">
    <property type="entry name" value="AMIDASES"/>
    <property type="match status" value="1"/>
</dbReference>
<sequence>MLNASLRQLSSLLSEKKISSTELTGEFLARIKALNPDLNAFITMDEEKSLDQARTADEMIATGQSTLLTGIPIAQKDIFCANGWLTTCGSKMLSNFISPYDATVVKQFDQVGMVNLGKTNMDEFAMGSSNETSYYGPVKNPWDRLAVPGGSSGGSACAVAARLAPAATGTDTGGSIRQPAALCGISGIKPTYGLVSRYGMIAFASSLDQAGPMARSAEDLALLLNVMVGFDERDSTSLQREKEDYTQDLEKPVSGLRIGLPKEFFAEGMSSDVSSAVEAALAEYRKLGATFVEVSLPNSKLAVPVYYVLAPAEASSNLSRFDGVRYGHRAAQYANLEDLYAKTRAEGFGDEVKRRILIGTYVLSHGYYDAYYLQAQKLRRLIAEDFKKAFEQCDLIMGPTSPTVAFNIGERCNDPIQMYLSDIYTSAASLAGLPGMSIPVGFGSKNRPVGLHIIGNYFREAQMLNAAHRYQLATNWHELTPPEMNR</sequence>
<keyword id="KW-0067">ATP-binding</keyword>
<keyword id="KW-0436">Ligase</keyword>
<keyword id="KW-0547">Nucleotide-binding</keyword>
<keyword id="KW-0648">Protein biosynthesis</keyword>
<feature type="chain" id="PRO_1000015872" description="Glutamyl-tRNA(Gln) amidotransferase subunit A">
    <location>
        <begin position="1"/>
        <end position="486"/>
    </location>
</feature>
<feature type="active site" description="Charge relay system" evidence="1">
    <location>
        <position position="76"/>
    </location>
</feature>
<feature type="active site" description="Charge relay system" evidence="1">
    <location>
        <position position="151"/>
    </location>
</feature>
<feature type="active site" description="Acyl-ester intermediate" evidence="1">
    <location>
        <position position="175"/>
    </location>
</feature>
<reference key="1">
    <citation type="journal article" date="2007" name="Environ. Microbiol.">
        <title>Whole-genome analysis of the ammonia-oxidizing bacterium, Nitrosomonas eutropha C91: implications for niche adaptation.</title>
        <authorList>
            <person name="Stein L.Y."/>
            <person name="Arp D.J."/>
            <person name="Berube P.M."/>
            <person name="Chain P.S."/>
            <person name="Hauser L."/>
            <person name="Jetten M.S."/>
            <person name="Klotz M.G."/>
            <person name="Larimer F.W."/>
            <person name="Norton J.M."/>
            <person name="Op den Camp H.J.M."/>
            <person name="Shin M."/>
            <person name="Wei X."/>
        </authorList>
    </citation>
    <scope>NUCLEOTIDE SEQUENCE [LARGE SCALE GENOMIC DNA]</scope>
    <source>
        <strain>DSM 101675 / C91 / Nm57</strain>
    </source>
</reference>
<evidence type="ECO:0000255" key="1">
    <source>
        <dbReference type="HAMAP-Rule" id="MF_00120"/>
    </source>
</evidence>
<gene>
    <name evidence="1" type="primary">gatA</name>
    <name type="ordered locus">Neut_1594</name>
</gene>